<gene>
    <name evidence="19" type="primary">Calm1</name>
    <name type="synonym">Calm</name>
    <name type="synonym">Cam</name>
    <name type="synonym">Cam1</name>
</gene>
<dbReference type="EMBL" id="M19381">
    <property type="protein sequence ID" value="AAA66182.1"/>
    <property type="molecule type" value="mRNA"/>
</dbReference>
<dbReference type="EMBL" id="X61432">
    <property type="protein sequence ID" value="CAA43674.1"/>
    <property type="molecule type" value="mRNA"/>
</dbReference>
<dbReference type="EMBL" id="AK004673">
    <property type="protein sequence ID" value="BAB23462.1"/>
    <property type="molecule type" value="mRNA"/>
</dbReference>
<dbReference type="EMBL" id="AK013695">
    <property type="protein sequence ID" value="BAB28959.1"/>
    <property type="molecule type" value="mRNA"/>
</dbReference>
<dbReference type="EMBL" id="AK088141">
    <property type="protein sequence ID" value="BAC40168.1"/>
    <property type="molecule type" value="mRNA"/>
</dbReference>
<dbReference type="EMBL" id="AK150288">
    <property type="protein sequence ID" value="BAE29443.1"/>
    <property type="molecule type" value="mRNA"/>
</dbReference>
<dbReference type="EMBL" id="AK150978">
    <property type="protein sequence ID" value="BAE30007.1"/>
    <property type="molecule type" value="mRNA"/>
</dbReference>
<dbReference type="EMBL" id="AK151001">
    <property type="protein sequence ID" value="BAE30025.1"/>
    <property type="molecule type" value="mRNA"/>
</dbReference>
<dbReference type="EMBL" id="AK151552">
    <property type="protein sequence ID" value="BAE30497.1"/>
    <property type="molecule type" value="mRNA"/>
</dbReference>
<dbReference type="EMBL" id="AK151784">
    <property type="protein sequence ID" value="BAE30686.1"/>
    <property type="molecule type" value="mRNA"/>
</dbReference>
<dbReference type="EMBL" id="AK151923">
    <property type="protein sequence ID" value="BAE30801.1"/>
    <property type="molecule type" value="mRNA"/>
</dbReference>
<dbReference type="EMBL" id="AK151992">
    <property type="protein sequence ID" value="BAE30856.1"/>
    <property type="molecule type" value="mRNA"/>
</dbReference>
<dbReference type="EMBL" id="AK152148">
    <property type="protein sequence ID" value="BAE30984.1"/>
    <property type="molecule type" value="mRNA"/>
</dbReference>
<dbReference type="EMBL" id="AK152715">
    <property type="protein sequence ID" value="BAE31439.1"/>
    <property type="molecule type" value="mRNA"/>
</dbReference>
<dbReference type="EMBL" id="AK152719">
    <property type="protein sequence ID" value="BAE31442.1"/>
    <property type="molecule type" value="mRNA"/>
</dbReference>
<dbReference type="EMBL" id="AK152850">
    <property type="protein sequence ID" value="BAE31543.1"/>
    <property type="molecule type" value="mRNA"/>
</dbReference>
<dbReference type="EMBL" id="AK152897">
    <property type="protein sequence ID" value="BAE31579.1"/>
    <property type="molecule type" value="mRNA"/>
</dbReference>
<dbReference type="EMBL" id="AK153004">
    <property type="protein sequence ID" value="BAE31644.1"/>
    <property type="molecule type" value="mRNA"/>
</dbReference>
<dbReference type="EMBL" id="AK153348">
    <property type="protein sequence ID" value="BAE31924.1"/>
    <property type="molecule type" value="mRNA"/>
</dbReference>
<dbReference type="EMBL" id="AK153426">
    <property type="protein sequence ID" value="BAE31985.1"/>
    <property type="molecule type" value="mRNA"/>
</dbReference>
<dbReference type="EMBL" id="AK153546">
    <property type="protein sequence ID" value="BAE32083.1"/>
    <property type="molecule type" value="mRNA"/>
</dbReference>
<dbReference type="EMBL" id="AK159762">
    <property type="protein sequence ID" value="BAE35353.1"/>
    <property type="molecule type" value="mRNA"/>
</dbReference>
<dbReference type="EMBL" id="AK160057">
    <property type="protein sequence ID" value="BAE35595.1"/>
    <property type="molecule type" value="mRNA"/>
</dbReference>
<dbReference type="EMBL" id="AK160508">
    <property type="protein sequence ID" value="BAE35832.1"/>
    <property type="molecule type" value="mRNA"/>
</dbReference>
<dbReference type="EMBL" id="AK161302">
    <property type="protein sequence ID" value="BAE36309.1"/>
    <property type="molecule type" value="mRNA"/>
</dbReference>
<dbReference type="EMBL" id="AK162314">
    <property type="protein sequence ID" value="BAE36849.1"/>
    <property type="molecule type" value="mRNA"/>
</dbReference>
<dbReference type="EMBL" id="AK166308">
    <property type="protein sequence ID" value="BAE38695.1"/>
    <property type="molecule type" value="mRNA"/>
</dbReference>
<dbReference type="EMBL" id="AK167353">
    <property type="protein sequence ID" value="BAE39452.1"/>
    <property type="molecule type" value="mRNA"/>
</dbReference>
<dbReference type="EMBL" id="AK168002">
    <property type="protein sequence ID" value="BAE39990.1"/>
    <property type="molecule type" value="mRNA"/>
</dbReference>
<dbReference type="EMBL" id="AK168241">
    <property type="protein sequence ID" value="BAE40191.1"/>
    <property type="molecule type" value="mRNA"/>
</dbReference>
<dbReference type="EMBL" id="AK168663">
    <property type="protein sequence ID" value="BAE40516.1"/>
    <property type="molecule type" value="mRNA"/>
</dbReference>
<dbReference type="EMBL" id="AK168803">
    <property type="protein sequence ID" value="BAE40633.1"/>
    <property type="molecule type" value="mRNA"/>
</dbReference>
<dbReference type="EMBL" id="AK169027">
    <property type="protein sequence ID" value="BAE40819.1"/>
    <property type="molecule type" value="mRNA"/>
</dbReference>
<dbReference type="EMBL" id="AK169055">
    <property type="protein sequence ID" value="BAE40843.1"/>
    <property type="molecule type" value="mRNA"/>
</dbReference>
<dbReference type="EMBL" id="AK169640">
    <property type="protein sequence ID" value="BAE41271.1"/>
    <property type="molecule type" value="mRNA"/>
</dbReference>
<dbReference type="EMBL" id="BC054805">
    <property type="protein sequence ID" value="AAH54805.1"/>
    <property type="molecule type" value="mRNA"/>
</dbReference>
<dbReference type="CCDS" id="CCDS36523.1"/>
<dbReference type="PIR" id="I49567">
    <property type="entry name" value="I49567"/>
</dbReference>
<dbReference type="RefSeq" id="NP_001300863.1">
    <property type="nucleotide sequence ID" value="NM_001313934.1"/>
</dbReference>
<dbReference type="RefSeq" id="NP_033920.1">
    <property type="nucleotide sequence ID" value="NM_009790.5"/>
</dbReference>
<dbReference type="PDB" id="1UP5">
    <property type="method" value="X-ray"/>
    <property type="resolution" value="1.90 A"/>
    <property type="chains" value="A/B=2-149"/>
</dbReference>
<dbReference type="PDB" id="2DFS">
    <property type="method" value="EM"/>
    <property type="resolution" value="24.00 A"/>
    <property type="chains" value="B/C/D/E/F/G/N/O/P/Q/R/S=2-149"/>
</dbReference>
<dbReference type="PDB" id="2IX7">
    <property type="method" value="X-ray"/>
    <property type="resolution" value="2.50 A"/>
    <property type="chains" value="A/B=3-147"/>
</dbReference>
<dbReference type="PDB" id="3WFN">
    <property type="method" value="X-ray"/>
    <property type="resolution" value="1.95 A"/>
    <property type="chains" value="B/C/D/E=1-149"/>
</dbReference>
<dbReference type="PDB" id="4E50">
    <property type="method" value="X-ray"/>
    <property type="resolution" value="2.70 A"/>
    <property type="chains" value="A=1-149"/>
</dbReference>
<dbReference type="PDB" id="4E53">
    <property type="method" value="X-ray"/>
    <property type="resolution" value="2.69 A"/>
    <property type="chains" value="A/B=1-149"/>
</dbReference>
<dbReference type="PDB" id="4HEX">
    <property type="method" value="X-ray"/>
    <property type="resolution" value="2.00 A"/>
    <property type="chains" value="A/B=1-149"/>
</dbReference>
<dbReference type="PDB" id="4ZLK">
    <property type="method" value="X-ray"/>
    <property type="resolution" value="2.50 A"/>
    <property type="chains" value="B=1-149"/>
</dbReference>
<dbReference type="PDB" id="7B1G">
    <property type="method" value="EM"/>
    <property type="resolution" value="3.60 A"/>
    <property type="chains" value="E=1-149"/>
</dbReference>
<dbReference type="PDB" id="7CQP">
    <property type="method" value="X-ray"/>
    <property type="resolution" value="1.90 A"/>
    <property type="chains" value="B=1-78"/>
</dbReference>
<dbReference type="PDB" id="7YV9">
    <property type="method" value="EM"/>
    <property type="resolution" value="4.78 A"/>
    <property type="chains" value="B/C/D/E/F/G/I/J/K/L/M/N=1-149"/>
</dbReference>
<dbReference type="PDB" id="8OF8">
    <property type="method" value="EM"/>
    <property type="resolution" value="7.50 A"/>
    <property type="chains" value="A/B/C/D/E/F=2-149"/>
</dbReference>
<dbReference type="PDB" id="8W41">
    <property type="method" value="EM"/>
    <property type="resolution" value="3.54 A"/>
    <property type="chains" value="B/I=1-149"/>
</dbReference>
<dbReference type="PDB" id="9CFU">
    <property type="method" value="EM"/>
    <property type="resolution" value="2.80 A"/>
    <property type="chains" value="R=1-148"/>
</dbReference>
<dbReference type="PDB" id="9CFV">
    <property type="method" value="EM"/>
    <property type="resolution" value="2.70 A"/>
    <property type="chains" value="R=1-148"/>
</dbReference>
<dbReference type="PDB" id="9CFW">
    <property type="method" value="EM"/>
    <property type="resolution" value="3.00 A"/>
    <property type="chains" value="R=1-148"/>
</dbReference>
<dbReference type="PDB" id="9CFX">
    <property type="method" value="EM"/>
    <property type="resolution" value="2.70 A"/>
    <property type="chains" value="R=1-148"/>
</dbReference>
<dbReference type="PDBsum" id="1UP5"/>
<dbReference type="PDBsum" id="2DFS"/>
<dbReference type="PDBsum" id="2IX7"/>
<dbReference type="PDBsum" id="3WFN"/>
<dbReference type="PDBsum" id="4E50"/>
<dbReference type="PDBsum" id="4E53"/>
<dbReference type="PDBsum" id="4HEX"/>
<dbReference type="PDBsum" id="4ZLK"/>
<dbReference type="PDBsum" id="7B1G"/>
<dbReference type="PDBsum" id="7CQP"/>
<dbReference type="PDBsum" id="7YV9"/>
<dbReference type="PDBsum" id="8OF8"/>
<dbReference type="PDBsum" id="8W41"/>
<dbReference type="PDBsum" id="9CFU"/>
<dbReference type="PDBsum" id="9CFV"/>
<dbReference type="PDBsum" id="9CFW"/>
<dbReference type="PDBsum" id="9CFX"/>
<dbReference type="EMDB" id="EMD-11985"/>
<dbReference type="EMDB" id="EMD-16850"/>
<dbReference type="EMDB" id="EMD-34121"/>
<dbReference type="EMDB" id="EMD-37260"/>
<dbReference type="EMDB" id="EMD-45563"/>
<dbReference type="EMDB" id="EMD-45564"/>
<dbReference type="EMDB" id="EMD-45565"/>
<dbReference type="EMDB" id="EMD-45566"/>
<dbReference type="SMR" id="P0DP26"/>
<dbReference type="FunCoup" id="P0DP26">
    <property type="interactions" value="4417"/>
</dbReference>
<dbReference type="STRING" id="10090.ENSMUSP00000019514"/>
<dbReference type="ChEMBL" id="CHEMBL3562176"/>
<dbReference type="GlyGen" id="P0DP26">
    <property type="glycosylation" value="1 site, 1 N-linked glycan (1 site)"/>
</dbReference>
<dbReference type="iPTMnet" id="P0DP26"/>
<dbReference type="MetOSite" id="P0DP26"/>
<dbReference type="PhosphoSitePlus" id="P0DP26"/>
<dbReference type="SwissPalm" id="P0DP26"/>
<dbReference type="jPOST" id="P0DP26"/>
<dbReference type="PaxDb" id="10090-ENSMUSP00000019514"/>
<dbReference type="Pumba" id="P0DP26"/>
<dbReference type="Antibodypedia" id="39411">
    <property type="antibodies" value="192 antibodies from 17 providers"/>
</dbReference>
<dbReference type="Antibodypedia" id="4344">
    <property type="antibodies" value="514 antibodies from 34 providers"/>
</dbReference>
<dbReference type="Antibodypedia" id="53945">
    <property type="antibodies" value="71 antibodies from 14 providers"/>
</dbReference>
<dbReference type="DNASU" id="12313"/>
<dbReference type="Ensembl" id="ENSMUST00000019514.10">
    <property type="protein sequence ID" value="ENSMUSP00000019514.10"/>
    <property type="gene ID" value="ENSMUSG00000019370.11"/>
</dbReference>
<dbReference type="Ensembl" id="ENSMUST00000040440.7">
    <property type="protein sequence ID" value="ENSMUSP00000048857.7"/>
    <property type="gene ID" value="ENSMUSG00000036438.15"/>
</dbReference>
<dbReference type="Ensembl" id="ENSMUST00000110082.11">
    <property type="protein sequence ID" value="ENSMUSP00000105709.4"/>
    <property type="gene ID" value="ENSMUSG00000001175.17"/>
</dbReference>
<dbReference type="GeneID" id="12313"/>
<dbReference type="KEGG" id="mmu:12313"/>
<dbReference type="KEGG" id="mmu:12314"/>
<dbReference type="KEGG" id="mmu:12315"/>
<dbReference type="AGR" id="MGI:88251"/>
<dbReference type="CTD" id="801"/>
<dbReference type="CTD" id="805"/>
<dbReference type="CTD" id="808"/>
<dbReference type="MGI" id="MGI:88251">
    <property type="gene designation" value="Calm1"/>
</dbReference>
<dbReference type="VEuPathDB" id="HostDB:ENSMUSG00000001175"/>
<dbReference type="VEuPathDB" id="HostDB:ENSMUSG00000019370"/>
<dbReference type="VEuPathDB" id="HostDB:ENSMUSG00000036438"/>
<dbReference type="eggNOG" id="KOG0027">
    <property type="taxonomic scope" value="Eukaryota"/>
</dbReference>
<dbReference type="InParanoid" id="P0DP26"/>
<dbReference type="OMA" id="ARKMKEC"/>
<dbReference type="OrthoDB" id="9559602at2759"/>
<dbReference type="Reactome" id="R-MMU-111932">
    <property type="pathway name" value="CaMK IV-mediated phosphorylation of CREB"/>
</dbReference>
<dbReference type="Reactome" id="R-MMU-111933">
    <property type="pathway name" value="Calmodulin induced events"/>
</dbReference>
<dbReference type="Reactome" id="R-MMU-111957">
    <property type="pathway name" value="Cam-PDE 1 activation"/>
</dbReference>
<dbReference type="Reactome" id="R-MMU-114608">
    <property type="pathway name" value="Platelet degranulation"/>
</dbReference>
<dbReference type="Reactome" id="R-MMU-1474151">
    <property type="pathway name" value="Tetrahydrobiopterin (BH4) synthesis, recycling, salvage and regulation"/>
</dbReference>
<dbReference type="Reactome" id="R-MMU-163615">
    <property type="pathway name" value="PKA activation"/>
</dbReference>
<dbReference type="Reactome" id="R-MMU-1855204">
    <property type="pathway name" value="Synthesis of IP3 and IP4 in the cytosol"/>
</dbReference>
<dbReference type="Reactome" id="R-MMU-2025928">
    <property type="pathway name" value="Calcineurin activates NFAT"/>
</dbReference>
<dbReference type="Reactome" id="R-MMU-203615">
    <property type="pathway name" value="eNOS activation"/>
</dbReference>
<dbReference type="Reactome" id="R-MMU-2514859">
    <property type="pathway name" value="Inactivation, recovery and regulation of the phototransduction cascade"/>
</dbReference>
<dbReference type="Reactome" id="R-MMU-2672351">
    <property type="pathway name" value="Stimuli-sensing channels"/>
</dbReference>
<dbReference type="Reactome" id="R-MMU-2871809">
    <property type="pathway name" value="FCERI mediated Ca+2 mobilization"/>
</dbReference>
<dbReference type="Reactome" id="R-MMU-4086398">
    <property type="pathway name" value="Ca2+ pathway"/>
</dbReference>
<dbReference type="Reactome" id="R-MMU-418359">
    <property type="pathway name" value="Reduction of cytosolic Ca++ levels"/>
</dbReference>
<dbReference type="Reactome" id="R-MMU-425561">
    <property type="pathway name" value="Sodium/Calcium exchangers"/>
</dbReference>
<dbReference type="Reactome" id="R-MMU-438066">
    <property type="pathway name" value="Unblocking of NMDA receptors, glutamate binding and activation"/>
</dbReference>
<dbReference type="Reactome" id="R-MMU-442729">
    <property type="pathway name" value="CREB1 phosphorylation through the activation of CaMKII/CaMKK/CaMKIV cascasde"/>
</dbReference>
<dbReference type="Reactome" id="R-MMU-445355">
    <property type="pathway name" value="Smooth Muscle Contraction"/>
</dbReference>
<dbReference type="Reactome" id="R-MMU-451308">
    <property type="pathway name" value="Activation of Ca-permeable Kainate Receptor"/>
</dbReference>
<dbReference type="Reactome" id="R-MMU-5218920">
    <property type="pathway name" value="VEGFR2 mediated vascular permeability"/>
</dbReference>
<dbReference type="Reactome" id="R-MMU-5578775">
    <property type="pathway name" value="Ion homeostasis"/>
</dbReference>
<dbReference type="Reactome" id="R-MMU-5607763">
    <property type="pathway name" value="CLEC7A (Dectin-1) induces NFAT activation"/>
</dbReference>
<dbReference type="Reactome" id="R-MMU-5626467">
    <property type="pathway name" value="RHO GTPases activate IQGAPs"/>
</dbReference>
<dbReference type="Reactome" id="R-MMU-5627123">
    <property type="pathway name" value="RHO GTPases activate PAKs"/>
</dbReference>
<dbReference type="Reactome" id="R-MMU-5673000">
    <property type="pathway name" value="RAF activation"/>
</dbReference>
<dbReference type="Reactome" id="R-MMU-5673001">
    <property type="pathway name" value="RAF/MAP kinase cascade"/>
</dbReference>
<dbReference type="Reactome" id="R-MMU-70221">
    <property type="pathway name" value="Glycogen breakdown (glycogenolysis)"/>
</dbReference>
<dbReference type="Reactome" id="R-MMU-8876725">
    <property type="pathway name" value="Protein methylation"/>
</dbReference>
<dbReference type="Reactome" id="R-MMU-9009391">
    <property type="pathway name" value="Extra-nuclear estrogen signaling"/>
</dbReference>
<dbReference type="Reactome" id="R-MMU-936837">
    <property type="pathway name" value="Ion transport by P-type ATPases"/>
</dbReference>
<dbReference type="Reactome" id="R-MMU-9619229">
    <property type="pathway name" value="Activation of RAC1 downstream of NMDARs"/>
</dbReference>
<dbReference type="Reactome" id="R-MMU-9648002">
    <property type="pathway name" value="RAS processing"/>
</dbReference>
<dbReference type="Reactome" id="R-MMU-9856530">
    <property type="pathway name" value="High laminar flow shear stress activates signaling by PIEZO1 and PECAM1:CDH5:KDR in endothelial cells"/>
</dbReference>
<dbReference type="BioGRID-ORCS" id="12313">
    <property type="hits" value="7 hits in 81 CRISPR screens"/>
</dbReference>
<dbReference type="BioGRID-ORCS" id="12314">
    <property type="hits" value="4 hits in 74 CRISPR screens"/>
</dbReference>
<dbReference type="BioGRID-ORCS" id="12315">
    <property type="hits" value="1 hit in 77 CRISPR screens"/>
</dbReference>
<dbReference type="ChiTaRS" id="Calm1">
    <property type="organism name" value="mouse"/>
</dbReference>
<dbReference type="EvolutionaryTrace" id="P0DP26"/>
<dbReference type="PRO" id="PR:P0DP26"/>
<dbReference type="Proteomes" id="UP000000589">
    <property type="component" value="Chromosome 12"/>
</dbReference>
<dbReference type="Proteomes" id="UP000000589">
    <property type="component" value="Chromosome 17"/>
</dbReference>
<dbReference type="Proteomes" id="UP000000589">
    <property type="component" value="Chromosome 7"/>
</dbReference>
<dbReference type="RNAct" id="P0DP26">
    <property type="molecule type" value="protein"/>
</dbReference>
<dbReference type="Bgee" id="ENSMUSG00000001175">
    <property type="expression patterns" value="Expressed in ureter smooth muscle and 283 other cell types or tissues"/>
</dbReference>
<dbReference type="ExpressionAtlas" id="P0DP26">
    <property type="expression patterns" value="baseline and differential"/>
</dbReference>
<dbReference type="GO" id="GO:0034704">
    <property type="term" value="C:calcium channel complex"/>
    <property type="evidence" value="ECO:0007669"/>
    <property type="project" value="Ensembl"/>
</dbReference>
<dbReference type="GO" id="GO:0044305">
    <property type="term" value="C:calyx of Held"/>
    <property type="evidence" value="ECO:0000314"/>
    <property type="project" value="SynGO"/>
</dbReference>
<dbReference type="GO" id="GO:1902494">
    <property type="term" value="C:catalytic complex"/>
    <property type="evidence" value="ECO:0007669"/>
    <property type="project" value="Ensembl"/>
</dbReference>
<dbReference type="GO" id="GO:0005813">
    <property type="term" value="C:centrosome"/>
    <property type="evidence" value="ECO:0007669"/>
    <property type="project" value="UniProtKB-SubCell"/>
</dbReference>
<dbReference type="GO" id="GO:0005737">
    <property type="term" value="C:cytoplasm"/>
    <property type="evidence" value="ECO:0000250"/>
    <property type="project" value="UniProtKB"/>
</dbReference>
<dbReference type="GO" id="GO:0005829">
    <property type="term" value="C:cytosol"/>
    <property type="evidence" value="ECO:0000304"/>
    <property type="project" value="Reactome"/>
</dbReference>
<dbReference type="GO" id="GO:0030426">
    <property type="term" value="C:growth cone"/>
    <property type="evidence" value="ECO:0007669"/>
    <property type="project" value="Ensembl"/>
</dbReference>
<dbReference type="GO" id="GO:0031966">
    <property type="term" value="C:mitochondrial membrane"/>
    <property type="evidence" value="ECO:0007669"/>
    <property type="project" value="Ensembl"/>
</dbReference>
<dbReference type="GO" id="GO:0043209">
    <property type="term" value="C:myelin sheath"/>
    <property type="evidence" value="ECO:0000314"/>
    <property type="project" value="CAFA"/>
</dbReference>
<dbReference type="GO" id="GO:0005654">
    <property type="term" value="C:nucleoplasm"/>
    <property type="evidence" value="ECO:0000304"/>
    <property type="project" value="Reactome"/>
</dbReference>
<dbReference type="GO" id="GO:0099524">
    <property type="term" value="C:postsynaptic cytosol"/>
    <property type="evidence" value="ECO:0007669"/>
    <property type="project" value="Ensembl"/>
</dbReference>
<dbReference type="GO" id="GO:0099523">
    <property type="term" value="C:presynaptic cytosol"/>
    <property type="evidence" value="ECO:0007669"/>
    <property type="project" value="Ensembl"/>
</dbReference>
<dbReference type="GO" id="GO:0030017">
    <property type="term" value="C:sarcomere"/>
    <property type="evidence" value="ECO:0007669"/>
    <property type="project" value="Ensembl"/>
</dbReference>
<dbReference type="GO" id="GO:0098685">
    <property type="term" value="C:Schaffer collateral - CA1 synapse"/>
    <property type="evidence" value="ECO:0007669"/>
    <property type="project" value="Ensembl"/>
</dbReference>
<dbReference type="GO" id="GO:0097225">
    <property type="term" value="C:sperm midpiece"/>
    <property type="evidence" value="ECO:0000314"/>
    <property type="project" value="UniProtKB"/>
</dbReference>
<dbReference type="GO" id="GO:0005876">
    <property type="term" value="C:spindle microtubule"/>
    <property type="evidence" value="ECO:0007669"/>
    <property type="project" value="Ensembl"/>
</dbReference>
<dbReference type="GO" id="GO:0000922">
    <property type="term" value="C:spindle pole"/>
    <property type="evidence" value="ECO:0007669"/>
    <property type="project" value="UniProtKB-SubCell"/>
</dbReference>
<dbReference type="GO" id="GO:0030672">
    <property type="term" value="C:synaptic vesicle membrane"/>
    <property type="evidence" value="ECO:0007669"/>
    <property type="project" value="Ensembl"/>
</dbReference>
<dbReference type="GO" id="GO:0008076">
    <property type="term" value="C:voltage-gated potassium channel complex"/>
    <property type="evidence" value="ECO:0000316"/>
    <property type="project" value="MGI"/>
</dbReference>
<dbReference type="GO" id="GO:0010856">
    <property type="term" value="F:adenylate cyclase activator activity"/>
    <property type="evidence" value="ECO:0007669"/>
    <property type="project" value="Ensembl"/>
</dbReference>
<dbReference type="GO" id="GO:0008179">
    <property type="term" value="F:adenylate cyclase binding"/>
    <property type="evidence" value="ECO:0007669"/>
    <property type="project" value="Ensembl"/>
</dbReference>
<dbReference type="GO" id="GO:0019855">
    <property type="term" value="F:calcium channel inhibitor activity"/>
    <property type="evidence" value="ECO:0000250"/>
    <property type="project" value="UniProtKB"/>
</dbReference>
<dbReference type="GO" id="GO:0005509">
    <property type="term" value="F:calcium ion binding"/>
    <property type="evidence" value="ECO:0000250"/>
    <property type="project" value="UniProtKB"/>
</dbReference>
<dbReference type="GO" id="GO:0048306">
    <property type="term" value="F:calcium-dependent protein binding"/>
    <property type="evidence" value="ECO:0007669"/>
    <property type="project" value="Ensembl"/>
</dbReference>
<dbReference type="GO" id="GO:0050998">
    <property type="term" value="F:nitric-oxide synthase binding"/>
    <property type="evidence" value="ECO:0007669"/>
    <property type="project" value="Ensembl"/>
</dbReference>
<dbReference type="GO" id="GO:0030235">
    <property type="term" value="F:nitric-oxide synthase regulator activity"/>
    <property type="evidence" value="ECO:0007669"/>
    <property type="project" value="Ensembl"/>
</dbReference>
<dbReference type="GO" id="GO:0043548">
    <property type="term" value="F:phosphatidylinositol 3-kinase binding"/>
    <property type="evidence" value="ECO:0007669"/>
    <property type="project" value="Ensembl"/>
</dbReference>
<dbReference type="GO" id="GO:0019904">
    <property type="term" value="F:protein domain specific binding"/>
    <property type="evidence" value="ECO:0007669"/>
    <property type="project" value="Ensembl"/>
</dbReference>
<dbReference type="GO" id="GO:0019901">
    <property type="term" value="F:protein kinase binding"/>
    <property type="evidence" value="ECO:0007669"/>
    <property type="project" value="Ensembl"/>
</dbReference>
<dbReference type="GO" id="GO:0072542">
    <property type="term" value="F:protein phosphatase activator activity"/>
    <property type="evidence" value="ECO:0007669"/>
    <property type="project" value="Ensembl"/>
</dbReference>
<dbReference type="GO" id="GO:0043539">
    <property type="term" value="F:protein serine/threonine kinase activator activity"/>
    <property type="evidence" value="ECO:0007669"/>
    <property type="project" value="Ensembl"/>
</dbReference>
<dbReference type="GO" id="GO:0031432">
    <property type="term" value="F:titin binding"/>
    <property type="evidence" value="ECO:0007669"/>
    <property type="project" value="Ensembl"/>
</dbReference>
<dbReference type="GO" id="GO:0044325">
    <property type="term" value="F:transmembrane transporter binding"/>
    <property type="evidence" value="ECO:0007669"/>
    <property type="project" value="Ensembl"/>
</dbReference>
<dbReference type="GO" id="GO:0031800">
    <property type="term" value="F:type 3 metabotropic glutamate receptor binding"/>
    <property type="evidence" value="ECO:0007669"/>
    <property type="project" value="Ensembl"/>
</dbReference>
<dbReference type="GO" id="GO:0016240">
    <property type="term" value="P:autophagosome membrane docking"/>
    <property type="evidence" value="ECO:0000250"/>
    <property type="project" value="UniProtKB"/>
</dbReference>
<dbReference type="GO" id="GO:0097720">
    <property type="term" value="P:calcineurin-mediated signaling"/>
    <property type="evidence" value="ECO:0007669"/>
    <property type="project" value="Ensembl"/>
</dbReference>
<dbReference type="GO" id="GO:0035458">
    <property type="term" value="P:cellular response to interferon-beta"/>
    <property type="evidence" value="ECO:0007669"/>
    <property type="project" value="Ensembl"/>
</dbReference>
<dbReference type="GO" id="GO:0071346">
    <property type="term" value="P:cellular response to type II interferon"/>
    <property type="evidence" value="ECO:0007669"/>
    <property type="project" value="Ensembl"/>
</dbReference>
<dbReference type="GO" id="GO:0005513">
    <property type="term" value="P:detection of calcium ion"/>
    <property type="evidence" value="ECO:0007669"/>
    <property type="project" value="Ensembl"/>
</dbReference>
<dbReference type="GO" id="GO:0090151">
    <property type="term" value="P:establishment of protein localization to mitochondrial membrane"/>
    <property type="evidence" value="ECO:0007669"/>
    <property type="project" value="Ensembl"/>
</dbReference>
<dbReference type="GO" id="GO:0000086">
    <property type="term" value="P:G2/M transition of mitotic cell cycle"/>
    <property type="evidence" value="ECO:0000314"/>
    <property type="project" value="MGI"/>
</dbReference>
<dbReference type="GO" id="GO:1990456">
    <property type="term" value="P:mitochondrion-endoplasmic reticulum membrane tethering"/>
    <property type="evidence" value="ECO:0000250"/>
    <property type="project" value="UniProtKB"/>
</dbReference>
<dbReference type="GO" id="GO:0060315">
    <property type="term" value="P:negative regulation of ryanodine-sensitive calcium-release channel activity"/>
    <property type="evidence" value="ECO:0000250"/>
    <property type="project" value="UniProtKB"/>
</dbReference>
<dbReference type="GO" id="GO:0140056">
    <property type="term" value="P:organelle localization by membrane tethering"/>
    <property type="evidence" value="ECO:0000250"/>
    <property type="project" value="UniProtKB"/>
</dbReference>
<dbReference type="GO" id="GO:0046427">
    <property type="term" value="P:positive regulation of receptor signaling pathway via JAK-STAT"/>
    <property type="evidence" value="ECO:0007669"/>
    <property type="project" value="Ensembl"/>
</dbReference>
<dbReference type="GO" id="GO:0140238">
    <property type="term" value="P:presynaptic endocytosis"/>
    <property type="evidence" value="ECO:0000314"/>
    <property type="project" value="SynGO"/>
</dbReference>
<dbReference type="GO" id="GO:0098901">
    <property type="term" value="P:regulation of cardiac muscle cell action potential"/>
    <property type="evidence" value="ECO:0007669"/>
    <property type="project" value="Ensembl"/>
</dbReference>
<dbReference type="GO" id="GO:0055117">
    <property type="term" value="P:regulation of cardiac muscle contraction"/>
    <property type="evidence" value="ECO:0007669"/>
    <property type="project" value="Ensembl"/>
</dbReference>
<dbReference type="GO" id="GO:0032465">
    <property type="term" value="P:regulation of cytokinesis"/>
    <property type="evidence" value="ECO:0007669"/>
    <property type="project" value="Ensembl"/>
</dbReference>
<dbReference type="GO" id="GO:0002027">
    <property type="term" value="P:regulation of heart rate"/>
    <property type="evidence" value="ECO:0007669"/>
    <property type="project" value="Ensembl"/>
</dbReference>
<dbReference type="GO" id="GO:0010880">
    <property type="term" value="P:regulation of release of sequestered calcium ion into cytosol by sarcoplasmic reticulum"/>
    <property type="evidence" value="ECO:0007669"/>
    <property type="project" value="Ensembl"/>
</dbReference>
<dbReference type="GO" id="GO:0060314">
    <property type="term" value="P:regulation of ryanodine-sensitive calcium-release channel activity"/>
    <property type="evidence" value="ECO:0000250"/>
    <property type="project" value="UniProtKB"/>
</dbReference>
<dbReference type="GO" id="GO:1900242">
    <property type="term" value="P:regulation of synaptic vesicle endocytosis"/>
    <property type="evidence" value="ECO:0007669"/>
    <property type="project" value="Ensembl"/>
</dbReference>
<dbReference type="GO" id="GO:2000300">
    <property type="term" value="P:regulation of synaptic vesicle exocytosis"/>
    <property type="evidence" value="ECO:0007669"/>
    <property type="project" value="Ensembl"/>
</dbReference>
<dbReference type="GO" id="GO:0001975">
    <property type="term" value="P:response to amphetamine"/>
    <property type="evidence" value="ECO:0007669"/>
    <property type="project" value="Ensembl"/>
</dbReference>
<dbReference type="GO" id="GO:0051412">
    <property type="term" value="P:response to corticosterone"/>
    <property type="evidence" value="ECO:0007669"/>
    <property type="project" value="Ensembl"/>
</dbReference>
<dbReference type="CDD" id="cd00051">
    <property type="entry name" value="EFh"/>
    <property type="match status" value="2"/>
</dbReference>
<dbReference type="FunFam" id="1.10.238.10:FF:000527">
    <property type="entry name" value="Calmodulin-3"/>
    <property type="match status" value="1"/>
</dbReference>
<dbReference type="Gene3D" id="1.10.238.10">
    <property type="entry name" value="EF-hand"/>
    <property type="match status" value="3"/>
</dbReference>
<dbReference type="InterPro" id="IPR050230">
    <property type="entry name" value="CALM/Myosin/TropC-like"/>
</dbReference>
<dbReference type="InterPro" id="IPR011992">
    <property type="entry name" value="EF-hand-dom_pair"/>
</dbReference>
<dbReference type="InterPro" id="IPR018247">
    <property type="entry name" value="EF_Hand_1_Ca_BS"/>
</dbReference>
<dbReference type="InterPro" id="IPR002048">
    <property type="entry name" value="EF_hand_dom"/>
</dbReference>
<dbReference type="PANTHER" id="PTHR23048:SF0">
    <property type="entry name" value="CALMODULIN LIKE 3"/>
    <property type="match status" value="1"/>
</dbReference>
<dbReference type="PANTHER" id="PTHR23048">
    <property type="entry name" value="MYOSIN LIGHT CHAIN 1, 3"/>
    <property type="match status" value="1"/>
</dbReference>
<dbReference type="Pfam" id="PF13499">
    <property type="entry name" value="EF-hand_7"/>
    <property type="match status" value="2"/>
</dbReference>
<dbReference type="PRINTS" id="PR00450">
    <property type="entry name" value="RECOVERIN"/>
</dbReference>
<dbReference type="SMART" id="SM00054">
    <property type="entry name" value="EFh"/>
    <property type="match status" value="4"/>
</dbReference>
<dbReference type="SUPFAM" id="SSF47473">
    <property type="entry name" value="EF-hand"/>
    <property type="match status" value="1"/>
</dbReference>
<dbReference type="PROSITE" id="PS00018">
    <property type="entry name" value="EF_HAND_1"/>
    <property type="match status" value="4"/>
</dbReference>
<dbReference type="PROSITE" id="PS50222">
    <property type="entry name" value="EF_HAND_2"/>
    <property type="match status" value="4"/>
</dbReference>
<feature type="initiator methionine" description="Removed" evidence="17">
    <location>
        <position position="1"/>
    </location>
</feature>
<feature type="chain" id="PRO_0000439935" description="Calmodulin-1">
    <location>
        <begin position="2"/>
        <end position="149"/>
    </location>
</feature>
<feature type="domain" description="EF-hand 1" evidence="6">
    <location>
        <begin position="8"/>
        <end position="43"/>
    </location>
</feature>
<feature type="domain" description="EF-hand 2" evidence="6">
    <location>
        <begin position="44"/>
        <end position="79"/>
    </location>
</feature>
<feature type="domain" description="EF-hand 3" evidence="6">
    <location>
        <begin position="81"/>
        <end position="116"/>
    </location>
</feature>
<feature type="domain" description="EF-hand 4" evidence="6">
    <location>
        <begin position="117"/>
        <end position="149"/>
    </location>
</feature>
<feature type="region of interest" description="Necessary and sufficient for interaction with PCP4" evidence="2">
    <location>
        <begin position="77"/>
        <end position="149"/>
    </location>
</feature>
<feature type="binding site" evidence="6 21 22">
    <location>
        <position position="21"/>
    </location>
    <ligand>
        <name>Ca(2+)</name>
        <dbReference type="ChEBI" id="CHEBI:29108"/>
        <label>1</label>
    </ligand>
</feature>
<feature type="binding site" evidence="6 21 22">
    <location>
        <position position="23"/>
    </location>
    <ligand>
        <name>Ca(2+)</name>
        <dbReference type="ChEBI" id="CHEBI:29108"/>
        <label>1</label>
    </ligand>
</feature>
<feature type="binding site" evidence="6 21 22">
    <location>
        <position position="25"/>
    </location>
    <ligand>
        <name>Ca(2+)</name>
        <dbReference type="ChEBI" id="CHEBI:29108"/>
        <label>1</label>
    </ligand>
</feature>
<feature type="binding site" evidence="6 21 22">
    <location>
        <position position="27"/>
    </location>
    <ligand>
        <name>Ca(2+)</name>
        <dbReference type="ChEBI" id="CHEBI:29108"/>
        <label>1</label>
    </ligand>
</feature>
<feature type="binding site" evidence="6 21 22">
    <location>
        <position position="32"/>
    </location>
    <ligand>
        <name>Ca(2+)</name>
        <dbReference type="ChEBI" id="CHEBI:29108"/>
        <label>1</label>
    </ligand>
</feature>
<feature type="binding site" evidence="6 21 22">
    <location>
        <position position="57"/>
    </location>
    <ligand>
        <name>Ca(2+)</name>
        <dbReference type="ChEBI" id="CHEBI:29108"/>
        <label>2</label>
    </ligand>
</feature>
<feature type="binding site" evidence="6 21 22">
    <location>
        <position position="59"/>
    </location>
    <ligand>
        <name>Ca(2+)</name>
        <dbReference type="ChEBI" id="CHEBI:29108"/>
        <label>2</label>
    </ligand>
</feature>
<feature type="binding site" evidence="6 21 22">
    <location>
        <position position="61"/>
    </location>
    <ligand>
        <name>Ca(2+)</name>
        <dbReference type="ChEBI" id="CHEBI:29108"/>
        <label>2</label>
    </ligand>
</feature>
<feature type="binding site" evidence="6 21 22">
    <location>
        <position position="63"/>
    </location>
    <ligand>
        <name>Ca(2+)</name>
        <dbReference type="ChEBI" id="CHEBI:29108"/>
        <label>2</label>
    </ligand>
</feature>
<feature type="binding site" evidence="6 21 22">
    <location>
        <position position="68"/>
    </location>
    <ligand>
        <name>Ca(2+)</name>
        <dbReference type="ChEBI" id="CHEBI:29108"/>
        <label>2</label>
    </ligand>
</feature>
<feature type="binding site" evidence="6 21 22">
    <location>
        <position position="94"/>
    </location>
    <ligand>
        <name>Ca(2+)</name>
        <dbReference type="ChEBI" id="CHEBI:29108"/>
        <label>3</label>
    </ligand>
</feature>
<feature type="binding site" evidence="6 21 22">
    <location>
        <position position="96"/>
    </location>
    <ligand>
        <name>Ca(2+)</name>
        <dbReference type="ChEBI" id="CHEBI:29108"/>
        <label>3</label>
    </ligand>
</feature>
<feature type="binding site" evidence="6 21 22">
    <location>
        <position position="98"/>
    </location>
    <ligand>
        <name>Ca(2+)</name>
        <dbReference type="ChEBI" id="CHEBI:29108"/>
        <label>3</label>
    </ligand>
</feature>
<feature type="binding site" evidence="6 21 22">
    <location>
        <position position="100"/>
    </location>
    <ligand>
        <name>Ca(2+)</name>
        <dbReference type="ChEBI" id="CHEBI:29108"/>
        <label>3</label>
    </ligand>
</feature>
<feature type="binding site" evidence="6 21 22">
    <location>
        <position position="105"/>
    </location>
    <ligand>
        <name>Ca(2+)</name>
        <dbReference type="ChEBI" id="CHEBI:29108"/>
        <label>3</label>
    </ligand>
</feature>
<feature type="binding site" evidence="6 21 22">
    <location>
        <position position="130"/>
    </location>
    <ligand>
        <name>Ca(2+)</name>
        <dbReference type="ChEBI" id="CHEBI:29108"/>
        <label>4</label>
    </ligand>
</feature>
<feature type="binding site" evidence="6 21 22">
    <location>
        <position position="132"/>
    </location>
    <ligand>
        <name>Ca(2+)</name>
        <dbReference type="ChEBI" id="CHEBI:29108"/>
        <label>4</label>
    </ligand>
</feature>
<feature type="binding site" evidence="6 21 22">
    <location>
        <position position="134"/>
    </location>
    <ligand>
        <name>Ca(2+)</name>
        <dbReference type="ChEBI" id="CHEBI:29108"/>
        <label>4</label>
    </ligand>
</feature>
<feature type="binding site" evidence="6 21 22">
    <location>
        <position position="136"/>
    </location>
    <ligand>
        <name>Ca(2+)</name>
        <dbReference type="ChEBI" id="CHEBI:29108"/>
        <label>4</label>
    </ligand>
</feature>
<feature type="binding site" evidence="6 21 22">
    <location>
        <position position="141"/>
    </location>
    <ligand>
        <name>Ca(2+)</name>
        <dbReference type="ChEBI" id="CHEBI:29108"/>
        <label>4</label>
    </ligand>
</feature>
<feature type="modified residue" description="N-acetylalanine" evidence="17">
    <location>
        <position position="2"/>
    </location>
</feature>
<feature type="modified residue" description="N6-acetyllysine; alternate" evidence="25">
    <location>
        <position position="22"/>
    </location>
</feature>
<feature type="modified residue" description="Phosphothreonine; by CaMK4" evidence="3">
    <location>
        <position position="45"/>
    </location>
</feature>
<feature type="modified residue" description="Phosphoserine" evidence="2">
    <location>
        <position position="82"/>
    </location>
</feature>
<feature type="modified residue" description="N6-acetyllysine" evidence="2">
    <location>
        <position position="95"/>
    </location>
</feature>
<feature type="modified residue" description="Phosphotyrosine" evidence="23 24">
    <location>
        <position position="100"/>
    </location>
</feature>
<feature type="modified residue" description="Phosphoserine" evidence="24">
    <location>
        <position position="102"/>
    </location>
</feature>
<feature type="modified residue" description="Phosphothreonine" evidence="2">
    <location>
        <position position="111"/>
    </location>
</feature>
<feature type="modified residue" description="N6,N6,N6-trimethyllysine; alternate" evidence="2">
    <location>
        <position position="116"/>
    </location>
</feature>
<feature type="modified residue" description="N6-methyllysine; alternate" evidence="2">
    <location>
        <position position="116"/>
    </location>
</feature>
<feature type="modified residue" description="Phosphotyrosine" evidence="2">
    <location>
        <position position="139"/>
    </location>
</feature>
<feature type="cross-link" description="Glycyl lysine isopeptide (Lys-Gly) (interchain with G-Cter in SUMO2); alternate" evidence="2">
    <location>
        <position position="22"/>
    </location>
</feature>
<feature type="cross-link" description="Glycyl lysine isopeptide (Lys-Gly) (interchain with G-Cter in ubiquitin); alternate" evidence="4">
    <location>
        <position position="22"/>
    </location>
</feature>
<feature type="mutagenesis site" description="Decreases interaction with SCN8A in the absence of calcium." evidence="11">
    <original>E</original>
    <variation>A</variation>
    <location>
        <position position="115"/>
    </location>
</feature>
<feature type="mutagenesis site" description="Decreases interaction with SCN8A in the absence of calcium." evidence="11">
    <original>E</original>
    <variation>A</variation>
    <location>
        <position position="121"/>
    </location>
</feature>
<feature type="mutagenesis site" description="Decreases interaction with SCN8A in the absence of calcium." evidence="11">
    <original>E</original>
    <variation>A</variation>
    <location>
        <position position="124"/>
    </location>
</feature>
<feature type="mutagenesis site" description="Decreases interaction with SCN8A in the absence of calcium." evidence="11">
    <original>E</original>
    <variation>A</variation>
    <location>
        <position position="128"/>
    </location>
</feature>
<feature type="sequence conflict" description="In Ref. 1; AAA66182." evidence="18" ref="1">
    <original>G</original>
    <variation>N</variation>
    <location>
        <position position="26"/>
    </location>
</feature>
<feature type="sequence conflict" description="In Ref. 3; BAE41271." evidence="18" ref="3">
    <original>E</original>
    <variation>V</variation>
    <location>
        <position position="55"/>
    </location>
</feature>
<feature type="sequence conflict" description="In Ref. 3; BAE40191." evidence="18" ref="3">
    <original>F</original>
    <variation>L</variation>
    <location>
        <position position="69"/>
    </location>
</feature>
<feature type="sequence conflict" description="In Ref. 3; BAE31439/BAE31644/BAE31442." evidence="18" ref="3">
    <original>S</original>
    <variation>G</variation>
    <location>
        <position position="82"/>
    </location>
</feature>
<feature type="sequence conflict" description="In Ref. 3; BAE31579." evidence="18" ref="3">
    <original>I</original>
    <variation>T</variation>
    <location>
        <position position="126"/>
    </location>
</feature>
<feature type="sequence conflict" description="In Ref. 3; BAB28959." evidence="18" ref="3">
    <original>V</original>
    <variation>L</variation>
    <location>
        <position position="143"/>
    </location>
</feature>
<feature type="helix" evidence="26">
    <location>
        <begin position="2"/>
        <end position="4"/>
    </location>
</feature>
<feature type="helix" evidence="29">
    <location>
        <begin position="7"/>
        <end position="20"/>
    </location>
</feature>
<feature type="strand" evidence="29">
    <location>
        <begin position="25"/>
        <end position="28"/>
    </location>
</feature>
<feature type="helix" evidence="29">
    <location>
        <begin position="30"/>
        <end position="39"/>
    </location>
</feature>
<feature type="helix" evidence="29">
    <location>
        <begin position="46"/>
        <end position="56"/>
    </location>
</feature>
<feature type="strand" evidence="29">
    <location>
        <begin position="61"/>
        <end position="65"/>
    </location>
</feature>
<feature type="helix" evidence="29">
    <location>
        <begin position="66"/>
        <end position="77"/>
    </location>
</feature>
<feature type="helix" evidence="28">
    <location>
        <begin position="78"/>
        <end position="93"/>
    </location>
</feature>
<feature type="strand" evidence="26">
    <location>
        <begin position="98"/>
        <end position="102"/>
    </location>
</feature>
<feature type="helix" evidence="26">
    <location>
        <begin position="103"/>
        <end position="112"/>
    </location>
</feature>
<feature type="strand" evidence="26">
    <location>
        <begin position="113"/>
        <end position="115"/>
    </location>
</feature>
<feature type="helix" evidence="26">
    <location>
        <begin position="119"/>
        <end position="128"/>
    </location>
</feature>
<feature type="strand" evidence="27">
    <location>
        <begin position="131"/>
        <end position="133"/>
    </location>
</feature>
<feature type="strand" evidence="26">
    <location>
        <begin position="136"/>
        <end position="138"/>
    </location>
</feature>
<feature type="helix" evidence="26">
    <location>
        <begin position="139"/>
        <end position="146"/>
    </location>
</feature>
<protein>
    <recommendedName>
        <fullName evidence="2">Calmodulin-1</fullName>
    </recommendedName>
</protein>
<name>CALM1_MOUSE</name>
<accession>P0DP26</accession>
<accession>P02593</accession>
<accession>P62204</accession>
<accession>P70667</accession>
<accession>P99014</accession>
<accession>Q3TEH7</accession>
<accession>Q3THK5</accession>
<accession>Q3U6Z5</accession>
<accession>Q3U7C7</accession>
<accession>Q498A3</accession>
<accession>Q61379</accession>
<accession>Q61380</accession>
<accession>Q8BNC9</accession>
<accession>Q91VQ9</accession>
<accession>Q9D6G4</accession>
<organism>
    <name type="scientific">Mus musculus</name>
    <name type="common">Mouse</name>
    <dbReference type="NCBI Taxonomy" id="10090"/>
    <lineage>
        <taxon>Eukaryota</taxon>
        <taxon>Metazoa</taxon>
        <taxon>Chordata</taxon>
        <taxon>Craniata</taxon>
        <taxon>Vertebrata</taxon>
        <taxon>Euteleostomi</taxon>
        <taxon>Mammalia</taxon>
        <taxon>Eutheria</taxon>
        <taxon>Euarchontoglires</taxon>
        <taxon>Glires</taxon>
        <taxon>Rodentia</taxon>
        <taxon>Myomorpha</taxon>
        <taxon>Muroidea</taxon>
        <taxon>Muridae</taxon>
        <taxon>Murinae</taxon>
        <taxon>Mus</taxon>
        <taxon>Mus</taxon>
    </lineage>
</organism>
<comment type="function">
    <text evidence="2">Calmodulin acts as part of a calcium signal transduction pathway by mediating the control of a large number of enzymes, ion channels, aquaporins and other proteins through calcium-binding. Calcium-binding is required for the activation of calmodulin. Among the enzymes to be stimulated by the calmodulin-calcium complex are a number of protein kinases, such as myosin light-chain kinases and calmodulin-dependent protein kinase type II (CaMK2), and phosphatases. Together with CCP110 and centrin, is involved in a genetic pathway that regulates the centrosome cycle and progression through cytokinesis. Is a regulator of voltage-dependent L-type calcium channels. Mediates calcium-dependent inactivation of CACNA1C. Positively regulates calcium-activated potassium channel activity of KCNN2. Forms a potassium channel complex with KCNQ1 and regulates electrophysiological activity of the channel via calcium-binding. Acts as a sensor to modulate the endoplasmic reticulum contacts with other organelles mediated by VMP1:ATP2A2.</text>
</comment>
<comment type="subunit">
    <text evidence="1 2 3 5 7 8 9 10 11 12 13 14 15 16">Homotetramer (By similarity). Interacts with CEP97, CCP110, MYO1C, TTN/titin and SRY. Interacts with MYO10. Interacts with RRAD (By similarity). Interacts with USP6; the interaction is calcium dependent (By similarity). Interacts with CDK5RAP2. Interacts with SCN5A (By similarity). Interacts with FCHO1. Interacts with MIP in a 1:2 stoichiometry; the interaction with the cytoplasmic domains from two MIP subunits promotes MIP water channel closure. Interacts with ORAI1; this may play a role in the regulation of ORAI1-mediated calcium transport (By similarity). Interacts with RYR1 (PubMed:18650434). Interacts with MYO5A (PubMed:17151196). Interacts with IQCF1 (PubMed:25380116). Interacts with SYT7 (PubMed:24569478). Interacts with CEACAM1 (via cytoplasmic domain); this interaction is in a calcium dependent manner and reduces homophilic cell adhesion through dissociation of dimer (By similarity). Interacts with RYR2; regulates RYR2 calcium-release channel activity (PubMed:18650434). Interacts with PCP4; regulates calmodulin calcium-binding (By similarity). Interacts with the heterotetrameric KCNQ2 and KCNQ3 channel; the interaction is calcium-independent, constitutive and participates in the proper assembly of a functional heterotetrameric M channel (By similarity). Interacts with alpha-synuclein/SNCA (By similarity). Interacts with SLC9A1 in a calcium-dependent manner (By similarity). In the absence of Ca(+2), interacts with GIMAP4 (via IQ domain) (PubMed:16569770). Interacts with SCN8A; the interaction modulates the inactivation rate of SCN8A (PubMed:23942337). Interaction with KIF1A; the interaction is increased in presence of calcium and increases neuronal dense core vesicles motility (By similarity). Interacts with KCNN3 (By similarity). Interacts with KCNQ1 (via C-terminus); forms a heterooctameric structure (with 4:4 KCNQ1:CALM stoichiometry) in a calcium-independent manner (By similarity). Interacts with PIK3C3; the interaction modulates PIK3C3 kinase activity (By similarity). Interacts with HINT1; interaction increases in the presence of calcium ions (PubMed:31088288). Interacts with HINT3 (PubMed:31088288). Interacts with GARIN2; in mature sperm flagella (PubMed:29025071). Interacts with IQUB (PubMed:36417862). Interacts with SLC26A5 (via STAS domain); this interaction is calcium-dependent and the STAS domain interacts with only one lobe of CALM1 which is an elongated conformation (By similarity). Ca(2+)-bound CALM1 binds CNGA1:CNGB1 channel (via CaM1 and CaM2 regions); this interaction modulates the affinity of the channel for cNMPs in response to intracellular Ca(2+) levels. Interacts with ITPR1; this interaction inhibits inositol 1,4,5 trisphosphate binding in both the presence and absence of calcium and 1,4,5 trisphosphate-induced calcium release in the presence of calcium (PubMed:10620513). Component of the SIFI complex (By similarity). Interacts with KCNN4; this interaction allows channel opening (By similarity). Interacts with KCNN2; this interaction regulates the channel activity through calcium-binding (By similarity).</text>
</comment>
<comment type="subcellular location">
    <subcellularLocation>
        <location evidence="2">Cytoplasm</location>
        <location evidence="2">Cytoskeleton</location>
        <location evidence="2">Spindle</location>
    </subcellularLocation>
    <subcellularLocation>
        <location evidence="2">Cytoplasm</location>
        <location evidence="2">Cytoskeleton</location>
        <location evidence="2">Spindle pole</location>
    </subcellularLocation>
    <subcellularLocation>
        <location evidence="2">Cytoplasm</location>
        <location evidence="2">Cytoskeleton</location>
        <location evidence="2">Microtubule organizing center</location>
        <location evidence="2">Centrosome</location>
    </subcellularLocation>
    <subcellularLocation>
        <location evidence="14">Cell projection</location>
        <location evidence="14">Cilium</location>
        <location evidence="14">Flagellum</location>
    </subcellularLocation>
    <text evidence="2">Distributed throughout the cell during interphase, but during mitosis becomes dramatically localized to the spindle poles and the spindle microtubules.</text>
</comment>
<comment type="domain">
    <text evidence="2">The N-terminal and C-terminal lobes of CALM bind to the C-terminus of KCNQ1 in a clamp-like conformation. Binding of CALM C-terminus to KCNQ1 is calcium-independent but is essential for assembly of the structure. Binding of CALM N-terminus to KCNQ1 is calcium-dependent and regulates electrophysiological activity of the channel (By similarity). The C-lobe interacts with KCNN4 channels in a calcium-independent manner, whereas the N-lobe interacts with the S4-S5 linker of KCNN4 in a calcium-dependent manner playing a role as calcium sensor and gating the channel (By similarity).</text>
</comment>
<comment type="PTM">
    <text evidence="1">Ubiquitination results in a strongly decreased activity.</text>
</comment>
<comment type="PTM">
    <text evidence="1">Phosphorylation results in a decreased activity.</text>
</comment>
<comment type="miscellaneous">
    <text evidence="2">This protein has four functional calcium-binding sites.</text>
</comment>
<comment type="similarity">
    <text evidence="18">Belongs to the calmodulin family.</text>
</comment>
<evidence type="ECO:0000250" key="1"/>
<evidence type="ECO:0000250" key="2">
    <source>
        <dbReference type="UniProtKB" id="P0DP23"/>
    </source>
</evidence>
<evidence type="ECO:0000250" key="3">
    <source>
        <dbReference type="UniProtKB" id="P0DP29"/>
    </source>
</evidence>
<evidence type="ECO:0000250" key="4">
    <source>
        <dbReference type="UniProtKB" id="P62157"/>
    </source>
</evidence>
<evidence type="ECO:0000250" key="5">
    <source>
        <dbReference type="UniProtKB" id="P62161"/>
    </source>
</evidence>
<evidence type="ECO:0000255" key="6">
    <source>
        <dbReference type="PROSITE-ProRule" id="PRU00448"/>
    </source>
</evidence>
<evidence type="ECO:0000269" key="7">
    <source>
    </source>
</evidence>
<evidence type="ECO:0000269" key="8">
    <source>
    </source>
</evidence>
<evidence type="ECO:0000269" key="9">
    <source>
    </source>
</evidence>
<evidence type="ECO:0000269" key="10">
    <source>
    </source>
</evidence>
<evidence type="ECO:0000269" key="11">
    <source>
    </source>
</evidence>
<evidence type="ECO:0000269" key="12">
    <source>
    </source>
</evidence>
<evidence type="ECO:0000269" key="13">
    <source>
    </source>
</evidence>
<evidence type="ECO:0000269" key="14">
    <source>
    </source>
</evidence>
<evidence type="ECO:0000269" key="15">
    <source>
    </source>
</evidence>
<evidence type="ECO:0000269" key="16">
    <source>
    </source>
</evidence>
<evidence type="ECO:0000269" key="17">
    <source ref="5"/>
</evidence>
<evidence type="ECO:0000305" key="18"/>
<evidence type="ECO:0000312" key="19">
    <source>
        <dbReference type="MGI" id="MGI:88251"/>
    </source>
</evidence>
<evidence type="ECO:0007744" key="20">
    <source>
        <dbReference type="PDB" id="3WFN"/>
    </source>
</evidence>
<evidence type="ECO:0007744" key="21">
    <source>
        <dbReference type="PDB" id="4HEX"/>
    </source>
</evidence>
<evidence type="ECO:0007744" key="22">
    <source>
        <dbReference type="PDB" id="4ZLK"/>
    </source>
</evidence>
<evidence type="ECO:0007744" key="23">
    <source>
    </source>
</evidence>
<evidence type="ECO:0007744" key="24">
    <source>
    </source>
</evidence>
<evidence type="ECO:0007744" key="25">
    <source>
    </source>
</evidence>
<evidence type="ECO:0007829" key="26">
    <source>
        <dbReference type="PDB" id="3WFN"/>
    </source>
</evidence>
<evidence type="ECO:0007829" key="27">
    <source>
        <dbReference type="PDB" id="4E53"/>
    </source>
</evidence>
<evidence type="ECO:0007829" key="28">
    <source>
        <dbReference type="PDB" id="4HEX"/>
    </source>
</evidence>
<evidence type="ECO:0007829" key="29">
    <source>
        <dbReference type="PDB" id="7CQP"/>
    </source>
</evidence>
<keyword id="KW-0002">3D-structure</keyword>
<keyword id="KW-0007">Acetylation</keyword>
<keyword id="KW-0106">Calcium</keyword>
<keyword id="KW-0966">Cell projection</keyword>
<keyword id="KW-0969">Cilium</keyword>
<keyword id="KW-0963">Cytoplasm</keyword>
<keyword id="KW-0206">Cytoskeleton</keyword>
<keyword id="KW-0903">Direct protein sequencing</keyword>
<keyword id="KW-0282">Flagellum</keyword>
<keyword id="KW-1017">Isopeptide bond</keyword>
<keyword id="KW-0479">Metal-binding</keyword>
<keyword id="KW-0488">Methylation</keyword>
<keyword id="KW-0597">Phosphoprotein</keyword>
<keyword id="KW-1185">Reference proteome</keyword>
<keyword id="KW-0677">Repeat</keyword>
<keyword id="KW-0832">Ubl conjugation</keyword>
<reference key="1">
    <citation type="journal article" date="1988" name="J. Biol. Chem.">
        <title>The abundance of calmodulin mRNAs is regulated in phosphorylase kinase-deficient skeletal muscle.</title>
        <authorList>
            <person name="Bender P.K."/>
            <person name="Dedman J.R."/>
            <person name="Emerson C.P. Jr."/>
        </authorList>
    </citation>
    <scope>NUCLEOTIDE SEQUENCE [MRNA]</scope>
</reference>
<reference key="2">
    <citation type="journal article" date="1990" name="Eur. J. Neurosci.">
        <title>A collection of cDNA clones with specific expression patterns in mouse brain.</title>
        <authorList>
            <person name="Kato K."/>
        </authorList>
    </citation>
    <scope>NUCLEOTIDE SEQUENCE [LARGE SCALE MRNA]</scope>
    <source>
        <strain>BALB/cJ</strain>
        <tissue>Brain</tissue>
    </source>
</reference>
<reference key="3">
    <citation type="journal article" date="2005" name="Science">
        <title>The transcriptional landscape of the mammalian genome.</title>
        <authorList>
            <person name="Carninci P."/>
            <person name="Kasukawa T."/>
            <person name="Katayama S."/>
            <person name="Gough J."/>
            <person name="Frith M.C."/>
            <person name="Maeda N."/>
            <person name="Oyama R."/>
            <person name="Ravasi T."/>
            <person name="Lenhard B."/>
            <person name="Wells C."/>
            <person name="Kodzius R."/>
            <person name="Shimokawa K."/>
            <person name="Bajic V.B."/>
            <person name="Brenner S.E."/>
            <person name="Batalov S."/>
            <person name="Forrest A.R."/>
            <person name="Zavolan M."/>
            <person name="Davis M.J."/>
            <person name="Wilming L.G."/>
            <person name="Aidinis V."/>
            <person name="Allen J.E."/>
            <person name="Ambesi-Impiombato A."/>
            <person name="Apweiler R."/>
            <person name="Aturaliya R.N."/>
            <person name="Bailey T.L."/>
            <person name="Bansal M."/>
            <person name="Baxter L."/>
            <person name="Beisel K.W."/>
            <person name="Bersano T."/>
            <person name="Bono H."/>
            <person name="Chalk A.M."/>
            <person name="Chiu K.P."/>
            <person name="Choudhary V."/>
            <person name="Christoffels A."/>
            <person name="Clutterbuck D.R."/>
            <person name="Crowe M.L."/>
            <person name="Dalla E."/>
            <person name="Dalrymple B.P."/>
            <person name="de Bono B."/>
            <person name="Della Gatta G."/>
            <person name="di Bernardo D."/>
            <person name="Down T."/>
            <person name="Engstrom P."/>
            <person name="Fagiolini M."/>
            <person name="Faulkner G."/>
            <person name="Fletcher C.F."/>
            <person name="Fukushima T."/>
            <person name="Furuno M."/>
            <person name="Futaki S."/>
            <person name="Gariboldi M."/>
            <person name="Georgii-Hemming P."/>
            <person name="Gingeras T.R."/>
            <person name="Gojobori T."/>
            <person name="Green R.E."/>
            <person name="Gustincich S."/>
            <person name="Harbers M."/>
            <person name="Hayashi Y."/>
            <person name="Hensch T.K."/>
            <person name="Hirokawa N."/>
            <person name="Hill D."/>
            <person name="Huminiecki L."/>
            <person name="Iacono M."/>
            <person name="Ikeo K."/>
            <person name="Iwama A."/>
            <person name="Ishikawa T."/>
            <person name="Jakt M."/>
            <person name="Kanapin A."/>
            <person name="Katoh M."/>
            <person name="Kawasawa Y."/>
            <person name="Kelso J."/>
            <person name="Kitamura H."/>
            <person name="Kitano H."/>
            <person name="Kollias G."/>
            <person name="Krishnan S.P."/>
            <person name="Kruger A."/>
            <person name="Kummerfeld S.K."/>
            <person name="Kurochkin I.V."/>
            <person name="Lareau L.F."/>
            <person name="Lazarevic D."/>
            <person name="Lipovich L."/>
            <person name="Liu J."/>
            <person name="Liuni S."/>
            <person name="McWilliam S."/>
            <person name="Madan Babu M."/>
            <person name="Madera M."/>
            <person name="Marchionni L."/>
            <person name="Matsuda H."/>
            <person name="Matsuzawa S."/>
            <person name="Miki H."/>
            <person name="Mignone F."/>
            <person name="Miyake S."/>
            <person name="Morris K."/>
            <person name="Mottagui-Tabar S."/>
            <person name="Mulder N."/>
            <person name="Nakano N."/>
            <person name="Nakauchi H."/>
            <person name="Ng P."/>
            <person name="Nilsson R."/>
            <person name="Nishiguchi S."/>
            <person name="Nishikawa S."/>
            <person name="Nori F."/>
            <person name="Ohara O."/>
            <person name="Okazaki Y."/>
            <person name="Orlando V."/>
            <person name="Pang K.C."/>
            <person name="Pavan W.J."/>
            <person name="Pavesi G."/>
            <person name="Pesole G."/>
            <person name="Petrovsky N."/>
            <person name="Piazza S."/>
            <person name="Reed J."/>
            <person name="Reid J.F."/>
            <person name="Ring B.Z."/>
            <person name="Ringwald M."/>
            <person name="Rost B."/>
            <person name="Ruan Y."/>
            <person name="Salzberg S.L."/>
            <person name="Sandelin A."/>
            <person name="Schneider C."/>
            <person name="Schoenbach C."/>
            <person name="Sekiguchi K."/>
            <person name="Semple C.A."/>
            <person name="Seno S."/>
            <person name="Sessa L."/>
            <person name="Sheng Y."/>
            <person name="Shibata Y."/>
            <person name="Shimada H."/>
            <person name="Shimada K."/>
            <person name="Silva D."/>
            <person name="Sinclair B."/>
            <person name="Sperling S."/>
            <person name="Stupka E."/>
            <person name="Sugiura K."/>
            <person name="Sultana R."/>
            <person name="Takenaka Y."/>
            <person name="Taki K."/>
            <person name="Tammoja K."/>
            <person name="Tan S.L."/>
            <person name="Tang S."/>
            <person name="Taylor M.S."/>
            <person name="Tegner J."/>
            <person name="Teichmann S.A."/>
            <person name="Ueda H.R."/>
            <person name="van Nimwegen E."/>
            <person name="Verardo R."/>
            <person name="Wei C.L."/>
            <person name="Yagi K."/>
            <person name="Yamanishi H."/>
            <person name="Zabarovsky E."/>
            <person name="Zhu S."/>
            <person name="Zimmer A."/>
            <person name="Hide W."/>
            <person name="Bult C."/>
            <person name="Grimmond S.M."/>
            <person name="Teasdale R.D."/>
            <person name="Liu E.T."/>
            <person name="Brusic V."/>
            <person name="Quackenbush J."/>
            <person name="Wahlestedt C."/>
            <person name="Mattick J.S."/>
            <person name="Hume D.A."/>
            <person name="Kai C."/>
            <person name="Sasaki D."/>
            <person name="Tomaru Y."/>
            <person name="Fukuda S."/>
            <person name="Kanamori-Katayama M."/>
            <person name="Suzuki M."/>
            <person name="Aoki J."/>
            <person name="Arakawa T."/>
            <person name="Iida J."/>
            <person name="Imamura K."/>
            <person name="Itoh M."/>
            <person name="Kato T."/>
            <person name="Kawaji H."/>
            <person name="Kawagashira N."/>
            <person name="Kawashima T."/>
            <person name="Kojima M."/>
            <person name="Kondo S."/>
            <person name="Konno H."/>
            <person name="Nakano K."/>
            <person name="Ninomiya N."/>
            <person name="Nishio T."/>
            <person name="Okada M."/>
            <person name="Plessy C."/>
            <person name="Shibata K."/>
            <person name="Shiraki T."/>
            <person name="Suzuki S."/>
            <person name="Tagami M."/>
            <person name="Waki K."/>
            <person name="Watahiki A."/>
            <person name="Okamura-Oho Y."/>
            <person name="Suzuki H."/>
            <person name="Kawai J."/>
            <person name="Hayashizaki Y."/>
        </authorList>
    </citation>
    <scope>NUCLEOTIDE SEQUENCE [LARGE SCALE MRNA]</scope>
    <source>
        <strain>C57BL/6J</strain>
        <strain>DBA/2J</strain>
        <strain>NOD</strain>
        <tissue>Amnion</tissue>
        <tissue>Bone marrow</tissue>
        <tissue>Colon</tissue>
        <tissue>Hippocampus</tissue>
        <tissue>Kidney</tissue>
        <tissue>Liver</tissue>
        <tissue>Lung</tissue>
        <tissue>Mammary gland</tissue>
        <tissue>Ovary</tissue>
        <tissue>Placenta</tissue>
        <tissue>Stomach</tissue>
        <tissue>Testis</tissue>
        <tissue>Thymus</tissue>
        <tissue>Tongue</tissue>
    </source>
</reference>
<reference key="4">
    <citation type="journal article" date="2004" name="Genome Res.">
        <title>The status, quality, and expansion of the NIH full-length cDNA project: the Mammalian Gene Collection (MGC).</title>
        <authorList>
            <consortium name="The MGC Project Team"/>
        </authorList>
    </citation>
    <scope>NUCLEOTIDE SEQUENCE [LARGE SCALE MRNA]</scope>
    <source>
        <strain>129</strain>
        <strain>C57BL/6J</strain>
        <strain>Czech II</strain>
        <tissue>Brain</tissue>
        <tissue>Mammary tumor</tissue>
        <tissue>Placenta</tissue>
        <tissue>Spinal ganglion</tissue>
    </source>
</reference>
<reference key="5">
    <citation type="submission" date="2005-07" db="UniProtKB">
        <authorList>
            <person name="Bienvenut W.V."/>
        </authorList>
    </citation>
    <scope>PROTEIN SEQUENCE OF 2-14</scope>
    <scope>CLEAVAGE OF INITIATOR METHIONINE</scope>
    <scope>ACETYLATION AT ALA-2</scope>
    <scope>IDENTIFICATION BY MASS SPECTROMETRY</scope>
    <source>
        <strain>C57BL/6J</strain>
        <tissue>Liver</tissue>
    </source>
</reference>
<reference key="6">
    <citation type="submission" date="2007-04" db="UniProtKB">
        <authorList>
            <person name="Lubec G."/>
            <person name="Klug S."/>
            <person name="Kang S.U."/>
        </authorList>
    </citation>
    <scope>PROTEIN SEQUENCE OF 15-31; 79-87 AND 92-107</scope>
    <scope>IDENTIFICATION BY MASS SPECTROMETRY</scope>
    <source>
        <strain>C57BL/6J</strain>
        <tissue>Brain</tissue>
        <tissue>Hippocampus</tissue>
    </source>
</reference>
<reference key="7">
    <citation type="journal article" date="2000" name="Biochem. J.">
        <title>Ca2+-calmodulin inhibits Ca2+ release mediated by type-1, -2 and -3 inositol trisphosphate receptors.</title>
        <authorList>
            <person name="Adkins C.E."/>
            <person name="Morris S.A."/>
            <person name="De Smedt H."/>
            <person name="Sienaert I."/>
            <person name="Toeroek K."/>
            <person name="Taylor C.W."/>
        </authorList>
    </citation>
    <scope>INTERACTION WITH ITPR1</scope>
</reference>
<reference key="8">
    <citation type="journal article" date="2006" name="Blood">
        <title>Gimap4 accelerates T-cell death.</title>
        <authorList>
            <person name="Schnell S."/>
            <person name="Demolliere C."/>
            <person name="van den Berk P."/>
            <person name="Jacobs H."/>
        </authorList>
    </citation>
    <scope>INTERACTION WITH GIMAP4</scope>
</reference>
<reference key="9">
    <citation type="journal article" date="2008" name="J. Biol. Chem.">
        <title>S100A1 and calmodulin compete for the same binding site on ryanodine receptor.</title>
        <authorList>
            <person name="Wright N.T."/>
            <person name="Prosser B.L."/>
            <person name="Varney K.M."/>
            <person name="Zimmer D.B."/>
            <person name="Schneider M.F."/>
            <person name="Weber D.J."/>
        </authorList>
    </citation>
    <scope>INTERACTION WITH RYR1 AND RYR2</scope>
</reference>
<reference key="10">
    <citation type="journal article" date="2008" name="J. Proteome Res.">
        <title>Large-scale identification and evolution indexing of tyrosine phosphorylation sites from murine brain.</title>
        <authorList>
            <person name="Ballif B.A."/>
            <person name="Carey G.R."/>
            <person name="Sunyaev S.R."/>
            <person name="Gygi S.P."/>
        </authorList>
    </citation>
    <scope>PHOSPHORYLATION [LARGE SCALE ANALYSIS] AT TYR-100</scope>
    <scope>IDENTIFICATION BY MASS SPECTROMETRY [LARGE SCALE ANALYSIS]</scope>
    <source>
        <tissue>Brain</tissue>
    </source>
</reference>
<reference key="11">
    <citation type="journal article" date="2010" name="Cell">
        <title>A tissue-specific atlas of mouse protein phosphorylation and expression.</title>
        <authorList>
            <person name="Huttlin E.L."/>
            <person name="Jedrychowski M.P."/>
            <person name="Elias J.E."/>
            <person name="Goswami T."/>
            <person name="Rad R."/>
            <person name="Beausoleil S.A."/>
            <person name="Villen J."/>
            <person name="Haas W."/>
            <person name="Sowa M.E."/>
            <person name="Gygi S.P."/>
        </authorList>
    </citation>
    <scope>PHOSPHORYLATION [LARGE SCALE ANALYSIS] AT TYR-100 AND SER-102</scope>
    <scope>IDENTIFICATION BY MASS SPECTROMETRY [LARGE SCALE ANALYSIS]</scope>
    <source>
        <tissue>Brain</tissue>
        <tissue>Brown adipose tissue</tissue>
        <tissue>Heart</tissue>
        <tissue>Kidney</tissue>
        <tissue>Liver</tissue>
        <tissue>Lung</tissue>
        <tissue>Pancreas</tissue>
        <tissue>Spleen</tissue>
        <tissue>Testis</tissue>
    </source>
</reference>
<reference key="12">
    <citation type="journal article" date="2013" name="Mol. Cell">
        <title>SIRT5-mediated lysine desuccinylation impacts diverse metabolic pathways.</title>
        <authorList>
            <person name="Park J."/>
            <person name="Chen Y."/>
            <person name="Tishkoff D.X."/>
            <person name="Peng C."/>
            <person name="Tan M."/>
            <person name="Dai L."/>
            <person name="Xie Z."/>
            <person name="Zhang Y."/>
            <person name="Zwaans B.M."/>
            <person name="Skinner M.E."/>
            <person name="Lombard D.B."/>
            <person name="Zhao Y."/>
        </authorList>
    </citation>
    <scope>ACETYLATION [LARGE SCALE ANALYSIS] AT LYS-22</scope>
    <scope>IDENTIFICATION BY MASS SPECTROMETRY [LARGE SCALE ANALYSIS]</scope>
    <source>
        <tissue>Embryonic fibroblast</tissue>
    </source>
</reference>
<reference key="13">
    <citation type="journal article" date="2015" name="Andrology">
        <title>A novel acrosomal protein, IQCF1, involved in sperm capacitation and the acrosome reaction.</title>
        <authorList>
            <person name="Fang P."/>
            <person name="Xu W."/>
            <person name="Li D."/>
            <person name="Zhao X."/>
            <person name="Dai J."/>
            <person name="Wang Z."/>
            <person name="Yan X."/>
            <person name="Qin M."/>
            <person name="Zhang Y."/>
            <person name="Xu C."/>
            <person name="Wang L."/>
            <person name="Qiao Z."/>
        </authorList>
    </citation>
    <scope>INTERACTION WITH IQCF1</scope>
</reference>
<reference key="14">
    <citation type="journal article" date="2014" name="Elife">
        <title>Synaptotagmin 7 functions as a Ca2+-sensor for synaptic vesicle replenishment.</title>
        <authorList>
            <person name="Liu H."/>
            <person name="Bai H."/>
            <person name="Hui E."/>
            <person name="Yang L."/>
            <person name="Evans C.S."/>
            <person name="Wang Z."/>
            <person name="Kwon S.E."/>
            <person name="Chapman E.R."/>
        </authorList>
    </citation>
    <scope>INTERACTION WITH SYT7</scope>
</reference>
<reference key="15">
    <citation type="journal article" date="2019" name="Antioxid. Redox Signal.">
        <title>The Axonal Motor Neuropathy-Related HINT1 Protein Is a Zinc- and Calmodulin-Regulated Cysteine SUMO Protease.</title>
        <authorList>
            <person name="Cortes-Montero E."/>
            <person name="Rodriguez-Munoz M."/>
            <person name="Sanchez-Blazquez P."/>
            <person name="Garzon J."/>
        </authorList>
    </citation>
    <scope>INTERACTION WITH HINT1 AND HINT3</scope>
</reference>
<reference key="16">
    <citation type="journal article" date="2017" name="Hum. Reprod.">
        <title>The expression characteristics of FAM71D and its association with sperm motility.</title>
        <authorList>
            <person name="Ma Q."/>
            <person name="Li Y."/>
            <person name="Luo M."/>
            <person name="Guo H."/>
            <person name="Lin S."/>
            <person name="Chen J."/>
            <person name="Du Y."/>
            <person name="Jiang Z."/>
            <person name="Gui Y."/>
        </authorList>
    </citation>
    <scope>INTERACTION WITH GARIN2</scope>
    <scope>SUBCELLULAR LOCATION</scope>
</reference>
<reference key="17">
    <citation type="journal article" date="2022" name="Cell Rep.">
        <title>Differential requirements of IQUB for the assembly of radial spoke 1 and the motility of mouse cilia and flagella.</title>
        <authorList>
            <person name="Zhang X."/>
            <person name="Xiao Z."/>
            <person name="Zhang J."/>
            <person name="Xu C."/>
            <person name="Liu S."/>
            <person name="Cheng L."/>
            <person name="Zhou S."/>
            <person name="Zhao S."/>
            <person name="Zhang Y."/>
            <person name="Wu J."/>
            <person name="Wang Y."/>
            <person name="Liu M."/>
        </authorList>
    </citation>
    <scope>INTERACTION WITH IQUB</scope>
</reference>
<reference key="18">
    <citation type="journal article" date="2006" name="Proc. Natl. Acad. Sci. U.S.A.">
        <title>Crystal structure of apo-calmodulin bound to the first two IQ motifs of myosin V reveals essential recognition features.</title>
        <authorList>
            <person name="Houdusse A."/>
            <person name="Gaucher J.F."/>
            <person name="Krementsova E."/>
            <person name="Mui S."/>
            <person name="Trybus K.M."/>
            <person name="Cohen C."/>
        </authorList>
    </citation>
    <scope>X-RAY CRYSTALLOGRAPHY (2.5 ANGSTROMS) OF 3-147 IN COMPLEX WITH MYO5A</scope>
</reference>
<reference evidence="20" key="19">
    <citation type="journal article" date="2013" name="Sci. Rep.">
        <title>Structural basis for the modulation of the neuronal voltage-gated sodium channel NaV1.6 by calmodulin.</title>
        <authorList>
            <person name="Reddy Chichili V.P."/>
            <person name="Xiao Y."/>
            <person name="Seetharaman J."/>
            <person name="Cummins T.R."/>
            <person name="Sivaraman J."/>
        </authorList>
    </citation>
    <scope>X-RAY CRYSTALLOGRAPHY (1.95 ANGSTROMS) OF 1893-1914 IN COMPLEX WITH SCN8A</scope>
    <scope>INTERACTION WITH SCN8A</scope>
    <scope>MUTAGENESIS OF GLU-115; GLU-121; GLU-124 AND GLU-128</scope>
</reference>
<sequence length="149" mass="16838">MADQLTEEQIAEFKEAFSLFDKDGDGTITTKELGTVMRSLGQNPTEAELQDMINEVDADGNGTIDFPEFLTMMARKMKDTDSEEEIREAFRVFDKDGNGYISAAELRHVMTNLGEKLTDEEVDEMIREADIDGDGQVNYEEFVQMMTAK</sequence>
<proteinExistence type="evidence at protein level"/>